<organism>
    <name type="scientific">Mus musculus</name>
    <name type="common">Mouse</name>
    <dbReference type="NCBI Taxonomy" id="10090"/>
    <lineage>
        <taxon>Eukaryota</taxon>
        <taxon>Metazoa</taxon>
        <taxon>Chordata</taxon>
        <taxon>Craniata</taxon>
        <taxon>Vertebrata</taxon>
        <taxon>Euteleostomi</taxon>
        <taxon>Mammalia</taxon>
        <taxon>Eutheria</taxon>
        <taxon>Euarchontoglires</taxon>
        <taxon>Glires</taxon>
        <taxon>Rodentia</taxon>
        <taxon>Myomorpha</taxon>
        <taxon>Muroidea</taxon>
        <taxon>Muridae</taxon>
        <taxon>Murinae</taxon>
        <taxon>Mus</taxon>
        <taxon>Mus</taxon>
    </lineage>
</organism>
<name>FA11_MOUSE</name>
<comment type="function">
    <text evidence="2">Factor XI triggers the middle phase of the intrinsic pathway of blood coagulation by activating factor IX.</text>
</comment>
<comment type="catalytic activity">
    <reaction evidence="2">
        <text>Selective cleavage of Arg-|-Ala and Arg-|-Val bonds in factor IX to form factor IXa.</text>
        <dbReference type="EC" id="3.4.21.27"/>
    </reaction>
</comment>
<comment type="activity regulation">
    <text evidence="2">Inhibited by SERPINA5.</text>
</comment>
<comment type="subunit">
    <text evidence="2">Homodimer; disulfide-linked (By similarity). After activation the heavy and light chains are also linked by a disulfide bond (By similarity). Interacts (activated) with F9 (inactive and activated) in calcium-dependent manner (By similarity). Forms a heterodimer with SERPINA5 (By similarity).</text>
</comment>
<comment type="subcellular location">
    <subcellularLocation>
        <location>Secreted</location>
    </subcellularLocation>
</comment>
<comment type="PTM">
    <text evidence="1 2">Activated by factor XIIa (or XII), which cleaves each polypeptide after Arg-389 into the light chain, which contains the active site, and the heavy chain, which associates with high molecular weight (HMW) kininogen. Activated by F12 (activated); the presence of negatively charged surfaces accelerates activation (By similarity). Activated by F2 (thrombin); the presence of negatively charged surfaces, such as polyphosphate and dextran sulfate, strongly accelerates activation (By similarity). Autoactivated; the presence of negatively charged surfaces, such as polyphosphate and dextran sulfate, accelerates autoactivation and autolysis (By similarity).</text>
</comment>
<comment type="PTM">
    <text evidence="2">N-glycosylated on both chains. N-glycosylated sites mainly consist of nonfucosylated sialylated biantennary (in high abundance) and/or triantennary (in low abundance) complex structures.</text>
</comment>
<comment type="similarity">
    <text evidence="4">Belongs to the peptidase S1 family. Plasma kallikrein subfamily.</text>
</comment>
<proteinExistence type="evidence at transcript level"/>
<gene>
    <name type="primary">F11</name>
</gene>
<reference key="1">
    <citation type="journal article" date="1997" name="Blood">
        <title>A comparison of murine and human factor XI.</title>
        <authorList>
            <person name="Gailani D."/>
            <person name="Sun M.F."/>
            <person name="Sun Y."/>
        </authorList>
    </citation>
    <scope>NUCLEOTIDE SEQUENCE [MRNA]</scope>
    <source>
        <strain>B10.WR</strain>
        <tissue>Liver</tissue>
    </source>
</reference>
<reference key="2">
    <citation type="journal article" date="2005" name="Science">
        <title>The transcriptional landscape of the mammalian genome.</title>
        <authorList>
            <person name="Carninci P."/>
            <person name="Kasukawa T."/>
            <person name="Katayama S."/>
            <person name="Gough J."/>
            <person name="Frith M.C."/>
            <person name="Maeda N."/>
            <person name="Oyama R."/>
            <person name="Ravasi T."/>
            <person name="Lenhard B."/>
            <person name="Wells C."/>
            <person name="Kodzius R."/>
            <person name="Shimokawa K."/>
            <person name="Bajic V.B."/>
            <person name="Brenner S.E."/>
            <person name="Batalov S."/>
            <person name="Forrest A.R."/>
            <person name="Zavolan M."/>
            <person name="Davis M.J."/>
            <person name="Wilming L.G."/>
            <person name="Aidinis V."/>
            <person name="Allen J.E."/>
            <person name="Ambesi-Impiombato A."/>
            <person name="Apweiler R."/>
            <person name="Aturaliya R.N."/>
            <person name="Bailey T.L."/>
            <person name="Bansal M."/>
            <person name="Baxter L."/>
            <person name="Beisel K.W."/>
            <person name="Bersano T."/>
            <person name="Bono H."/>
            <person name="Chalk A.M."/>
            <person name="Chiu K.P."/>
            <person name="Choudhary V."/>
            <person name="Christoffels A."/>
            <person name="Clutterbuck D.R."/>
            <person name="Crowe M.L."/>
            <person name="Dalla E."/>
            <person name="Dalrymple B.P."/>
            <person name="de Bono B."/>
            <person name="Della Gatta G."/>
            <person name="di Bernardo D."/>
            <person name="Down T."/>
            <person name="Engstrom P."/>
            <person name="Fagiolini M."/>
            <person name="Faulkner G."/>
            <person name="Fletcher C.F."/>
            <person name="Fukushima T."/>
            <person name="Furuno M."/>
            <person name="Futaki S."/>
            <person name="Gariboldi M."/>
            <person name="Georgii-Hemming P."/>
            <person name="Gingeras T.R."/>
            <person name="Gojobori T."/>
            <person name="Green R.E."/>
            <person name="Gustincich S."/>
            <person name="Harbers M."/>
            <person name="Hayashi Y."/>
            <person name="Hensch T.K."/>
            <person name="Hirokawa N."/>
            <person name="Hill D."/>
            <person name="Huminiecki L."/>
            <person name="Iacono M."/>
            <person name="Ikeo K."/>
            <person name="Iwama A."/>
            <person name="Ishikawa T."/>
            <person name="Jakt M."/>
            <person name="Kanapin A."/>
            <person name="Katoh M."/>
            <person name="Kawasawa Y."/>
            <person name="Kelso J."/>
            <person name="Kitamura H."/>
            <person name="Kitano H."/>
            <person name="Kollias G."/>
            <person name="Krishnan S.P."/>
            <person name="Kruger A."/>
            <person name="Kummerfeld S.K."/>
            <person name="Kurochkin I.V."/>
            <person name="Lareau L.F."/>
            <person name="Lazarevic D."/>
            <person name="Lipovich L."/>
            <person name="Liu J."/>
            <person name="Liuni S."/>
            <person name="McWilliam S."/>
            <person name="Madan Babu M."/>
            <person name="Madera M."/>
            <person name="Marchionni L."/>
            <person name="Matsuda H."/>
            <person name="Matsuzawa S."/>
            <person name="Miki H."/>
            <person name="Mignone F."/>
            <person name="Miyake S."/>
            <person name="Morris K."/>
            <person name="Mottagui-Tabar S."/>
            <person name="Mulder N."/>
            <person name="Nakano N."/>
            <person name="Nakauchi H."/>
            <person name="Ng P."/>
            <person name="Nilsson R."/>
            <person name="Nishiguchi S."/>
            <person name="Nishikawa S."/>
            <person name="Nori F."/>
            <person name="Ohara O."/>
            <person name="Okazaki Y."/>
            <person name="Orlando V."/>
            <person name="Pang K.C."/>
            <person name="Pavan W.J."/>
            <person name="Pavesi G."/>
            <person name="Pesole G."/>
            <person name="Petrovsky N."/>
            <person name="Piazza S."/>
            <person name="Reed J."/>
            <person name="Reid J.F."/>
            <person name="Ring B.Z."/>
            <person name="Ringwald M."/>
            <person name="Rost B."/>
            <person name="Ruan Y."/>
            <person name="Salzberg S.L."/>
            <person name="Sandelin A."/>
            <person name="Schneider C."/>
            <person name="Schoenbach C."/>
            <person name="Sekiguchi K."/>
            <person name="Semple C.A."/>
            <person name="Seno S."/>
            <person name="Sessa L."/>
            <person name="Sheng Y."/>
            <person name="Shibata Y."/>
            <person name="Shimada H."/>
            <person name="Shimada K."/>
            <person name="Silva D."/>
            <person name="Sinclair B."/>
            <person name="Sperling S."/>
            <person name="Stupka E."/>
            <person name="Sugiura K."/>
            <person name="Sultana R."/>
            <person name="Takenaka Y."/>
            <person name="Taki K."/>
            <person name="Tammoja K."/>
            <person name="Tan S.L."/>
            <person name="Tang S."/>
            <person name="Taylor M.S."/>
            <person name="Tegner J."/>
            <person name="Teichmann S.A."/>
            <person name="Ueda H.R."/>
            <person name="van Nimwegen E."/>
            <person name="Verardo R."/>
            <person name="Wei C.L."/>
            <person name="Yagi K."/>
            <person name="Yamanishi H."/>
            <person name="Zabarovsky E."/>
            <person name="Zhu S."/>
            <person name="Zimmer A."/>
            <person name="Hide W."/>
            <person name="Bult C."/>
            <person name="Grimmond S.M."/>
            <person name="Teasdale R.D."/>
            <person name="Liu E.T."/>
            <person name="Brusic V."/>
            <person name="Quackenbush J."/>
            <person name="Wahlestedt C."/>
            <person name="Mattick J.S."/>
            <person name="Hume D.A."/>
            <person name="Kai C."/>
            <person name="Sasaki D."/>
            <person name="Tomaru Y."/>
            <person name="Fukuda S."/>
            <person name="Kanamori-Katayama M."/>
            <person name="Suzuki M."/>
            <person name="Aoki J."/>
            <person name="Arakawa T."/>
            <person name="Iida J."/>
            <person name="Imamura K."/>
            <person name="Itoh M."/>
            <person name="Kato T."/>
            <person name="Kawaji H."/>
            <person name="Kawagashira N."/>
            <person name="Kawashima T."/>
            <person name="Kojima M."/>
            <person name="Kondo S."/>
            <person name="Konno H."/>
            <person name="Nakano K."/>
            <person name="Ninomiya N."/>
            <person name="Nishio T."/>
            <person name="Okada M."/>
            <person name="Plessy C."/>
            <person name="Shibata K."/>
            <person name="Shiraki T."/>
            <person name="Suzuki S."/>
            <person name="Tagami M."/>
            <person name="Waki K."/>
            <person name="Watahiki A."/>
            <person name="Okamura-Oho Y."/>
            <person name="Suzuki H."/>
            <person name="Kawai J."/>
            <person name="Hayashizaki Y."/>
        </authorList>
    </citation>
    <scope>NUCLEOTIDE SEQUENCE [LARGE SCALE MRNA]</scope>
    <source>
        <strain>C57BL/6J</strain>
        <tissue>Placenta</tissue>
    </source>
</reference>
<reference key="3">
    <citation type="submission" date="2005-07" db="EMBL/GenBank/DDBJ databases">
        <authorList>
            <person name="Mural R.J."/>
            <person name="Adams M.D."/>
            <person name="Myers E.W."/>
            <person name="Smith H.O."/>
            <person name="Venter J.C."/>
        </authorList>
    </citation>
    <scope>NUCLEOTIDE SEQUENCE [LARGE SCALE GENOMIC DNA]</scope>
</reference>
<reference key="4">
    <citation type="journal article" date="2004" name="Genome Res.">
        <title>The status, quality, and expansion of the NIH full-length cDNA project: the Mammalian Gene Collection (MGC).</title>
        <authorList>
            <consortium name="The MGC Project Team"/>
        </authorList>
    </citation>
    <scope>NUCLEOTIDE SEQUENCE [LARGE SCALE MRNA]</scope>
    <source>
        <strain>FVB/N</strain>
        <tissue>Liver</tissue>
    </source>
</reference>
<feature type="signal peptide" evidence="1">
    <location>
        <begin position="1"/>
        <end position="18"/>
    </location>
</feature>
<feature type="chain" id="PRO_0000027827" description="Coagulation factor XIa heavy chain" evidence="1">
    <location>
        <begin position="19"/>
        <end position="389"/>
    </location>
</feature>
<feature type="chain" id="PRO_0000027828" description="Coagulation factor XIa light chain" evidence="1">
    <location>
        <begin position="390"/>
        <end position="624"/>
    </location>
</feature>
<feature type="domain" description="Apple 1" evidence="5">
    <location>
        <begin position="20"/>
        <end position="103"/>
    </location>
</feature>
<feature type="domain" description="Apple 2" evidence="5">
    <location>
        <begin position="110"/>
        <end position="193"/>
    </location>
</feature>
<feature type="domain" description="Apple 3" evidence="5">
    <location>
        <begin position="200"/>
        <end position="283"/>
    </location>
</feature>
<feature type="domain" description="Apple 4" evidence="5">
    <location>
        <begin position="291"/>
        <end position="376"/>
    </location>
</feature>
<feature type="domain" description="Peptidase S1" evidence="4">
    <location>
        <begin position="390"/>
        <end position="622"/>
    </location>
</feature>
<feature type="active site" description="Charge relay system" evidence="1">
    <location>
        <position position="430"/>
    </location>
</feature>
<feature type="active site" description="Charge relay system" evidence="1">
    <location>
        <position position="479"/>
    </location>
</feature>
<feature type="active site" description="Charge relay system" evidence="1">
    <location>
        <position position="574"/>
    </location>
</feature>
<feature type="binding site" evidence="1">
    <location>
        <begin position="547"/>
        <end position="550"/>
    </location>
    <ligand>
        <name>heparin</name>
        <dbReference type="ChEBI" id="CHEBI:28304"/>
    </ligand>
</feature>
<feature type="glycosylation site" description="N-linked (GlcNAc...) asparagine" evidence="2">
    <location>
        <position position="90"/>
    </location>
</feature>
<feature type="glycosylation site" description="N-linked (GlcNAc...) asparagine" evidence="2">
    <location>
        <position position="126"/>
    </location>
</feature>
<feature type="glycosylation site" description="N-linked (GlcNAc...) asparagine" evidence="3">
    <location>
        <position position="297"/>
    </location>
</feature>
<feature type="glycosylation site" description="N-linked (GlcNAc...) asparagine" evidence="2">
    <location>
        <position position="449"/>
    </location>
</feature>
<feature type="glycosylation site" description="N-linked (GlcNAc...) asparagine" evidence="2">
    <location>
        <position position="490"/>
    </location>
</feature>
<feature type="disulfide bond" evidence="3">
    <location>
        <begin position="20"/>
        <end position="103"/>
    </location>
</feature>
<feature type="disulfide bond" evidence="1">
    <location>
        <begin position="46"/>
        <end position="76"/>
    </location>
</feature>
<feature type="disulfide bond" evidence="1">
    <location>
        <begin position="50"/>
        <end position="56"/>
    </location>
</feature>
<feature type="disulfide bond" evidence="1">
    <location>
        <begin position="110"/>
        <end position="193"/>
    </location>
</feature>
<feature type="disulfide bond" evidence="1">
    <location>
        <begin position="136"/>
        <end position="165"/>
    </location>
</feature>
<feature type="disulfide bond" evidence="1">
    <location>
        <begin position="140"/>
        <end position="146"/>
    </location>
</feature>
<feature type="disulfide bond" evidence="1">
    <location>
        <begin position="200"/>
        <end position="283"/>
    </location>
</feature>
<feature type="disulfide bond" evidence="1">
    <location>
        <begin position="226"/>
        <end position="255"/>
    </location>
</feature>
<feature type="disulfide bond" evidence="1">
    <location>
        <begin position="230"/>
        <end position="236"/>
    </location>
</feature>
<feature type="disulfide bond" evidence="1">
    <location>
        <begin position="291"/>
        <end position="376"/>
    </location>
</feature>
<feature type="disulfide bond" evidence="1">
    <location>
        <begin position="317"/>
        <end position="348"/>
    </location>
</feature>
<feature type="disulfide bond" evidence="1">
    <location>
        <begin position="321"/>
        <end position="327"/>
    </location>
</feature>
<feature type="disulfide bond" description="Interchain" evidence="3">
    <location>
        <position position="339"/>
    </location>
</feature>
<feature type="disulfide bond" description="Interchain (between heavy and light chains)" evidence="4 5">
    <location>
        <begin position="382"/>
        <end position="499"/>
    </location>
</feature>
<feature type="disulfide bond" evidence="1">
    <location>
        <begin position="415"/>
        <end position="431"/>
    </location>
</feature>
<feature type="disulfide bond" evidence="1">
    <location>
        <begin position="513"/>
        <end position="580"/>
    </location>
</feature>
<feature type="disulfide bond" evidence="1">
    <location>
        <begin position="544"/>
        <end position="559"/>
    </location>
</feature>
<feature type="disulfide bond" evidence="1">
    <location>
        <begin position="570"/>
        <end position="598"/>
    </location>
</feature>
<feature type="sequence conflict" description="In Ref. 1; AAK40233." evidence="6" ref="1">
    <original>V</original>
    <variation>E</variation>
    <location>
        <position position="114"/>
    </location>
</feature>
<feature type="sequence conflict" description="In Ref. 1; AAK40233." evidence="6" ref="1">
    <original>S</original>
    <variation>I</variation>
    <location>
        <position position="272"/>
    </location>
</feature>
<feature type="sequence conflict" description="In Ref. 1; AAK40233." evidence="6" ref="1">
    <original>I</original>
    <variation>L</variation>
    <location>
        <position position="368"/>
    </location>
</feature>
<feature type="sequence conflict" description="In Ref. 1; AAK40233." evidence="6" ref="1">
    <original>V</original>
    <variation>E</variation>
    <location>
        <position position="462"/>
    </location>
</feature>
<keyword id="KW-0094">Blood coagulation</keyword>
<keyword id="KW-1015">Disulfide bond</keyword>
<keyword id="KW-0325">Glycoprotein</keyword>
<keyword id="KW-0356">Hemostasis</keyword>
<keyword id="KW-0358">Heparin-binding</keyword>
<keyword id="KW-0378">Hydrolase</keyword>
<keyword id="KW-0645">Protease</keyword>
<keyword id="KW-1185">Reference proteome</keyword>
<keyword id="KW-0677">Repeat</keyword>
<keyword id="KW-0964">Secreted</keyword>
<keyword id="KW-0720">Serine protease</keyword>
<keyword id="KW-0732">Signal</keyword>
<keyword id="KW-0865">Zymogen</keyword>
<protein>
    <recommendedName>
        <fullName>Coagulation factor XI</fullName>
        <shortName>FXI</shortName>
        <ecNumber evidence="2">3.4.21.27</ecNumber>
    </recommendedName>
    <alternativeName>
        <fullName>Plasma thromboplastin antecedent</fullName>
        <shortName>PTA</shortName>
    </alternativeName>
    <component>
        <recommendedName>
            <fullName>Coagulation factor XIa heavy chain</fullName>
        </recommendedName>
    </component>
    <component>
        <recommendedName>
            <fullName>Coagulation factor XIa light chain</fullName>
        </recommendedName>
    </component>
</protein>
<dbReference type="EC" id="3.4.21.27" evidence="2"/>
<dbReference type="EMBL" id="AF356627">
    <property type="protein sequence ID" value="AAK40233.1"/>
    <property type="molecule type" value="mRNA"/>
</dbReference>
<dbReference type="EMBL" id="AK005546">
    <property type="protein sequence ID" value="BAB24114.1"/>
    <property type="molecule type" value="mRNA"/>
</dbReference>
<dbReference type="EMBL" id="CH466554">
    <property type="protein sequence ID" value="EDL35542.1"/>
    <property type="molecule type" value="Genomic_DNA"/>
</dbReference>
<dbReference type="EMBL" id="BC019485">
    <property type="protein sequence ID" value="AAH19485.1"/>
    <property type="molecule type" value="mRNA"/>
</dbReference>
<dbReference type="CCDS" id="CCDS22274.1"/>
<dbReference type="RefSeq" id="NP_082342.1">
    <property type="nucleotide sequence ID" value="NM_028066.3"/>
</dbReference>
<dbReference type="SMR" id="Q91Y47"/>
<dbReference type="FunCoup" id="Q91Y47">
    <property type="interactions" value="13"/>
</dbReference>
<dbReference type="STRING" id="10090.ENSMUSP00000034064"/>
<dbReference type="ChEMBL" id="CHEMBL5169185"/>
<dbReference type="MEROPS" id="S01.213"/>
<dbReference type="GlyCosmos" id="Q91Y47">
    <property type="glycosylation" value="5 sites, No reported glycans"/>
</dbReference>
<dbReference type="GlyGen" id="Q91Y47">
    <property type="glycosylation" value="5 sites"/>
</dbReference>
<dbReference type="iPTMnet" id="Q91Y47"/>
<dbReference type="PhosphoSitePlus" id="Q91Y47"/>
<dbReference type="SwissPalm" id="Q91Y47"/>
<dbReference type="CPTAC" id="non-CPTAC-3420"/>
<dbReference type="PaxDb" id="10090-ENSMUSP00000034064"/>
<dbReference type="PeptideAtlas" id="Q91Y47"/>
<dbReference type="ProteomicsDB" id="267694"/>
<dbReference type="Antibodypedia" id="17547">
    <property type="antibodies" value="577 antibodies from 35 providers"/>
</dbReference>
<dbReference type="DNASU" id="109821"/>
<dbReference type="Ensembl" id="ENSMUST00000034064.5">
    <property type="protein sequence ID" value="ENSMUSP00000034064.4"/>
    <property type="gene ID" value="ENSMUSG00000031645.5"/>
</dbReference>
<dbReference type="GeneID" id="109821"/>
<dbReference type="KEGG" id="mmu:109821"/>
<dbReference type="UCSC" id="uc009los.2">
    <property type="organism name" value="mouse"/>
</dbReference>
<dbReference type="AGR" id="MGI:99481"/>
<dbReference type="CTD" id="2160"/>
<dbReference type="MGI" id="MGI:99481">
    <property type="gene designation" value="F11"/>
</dbReference>
<dbReference type="VEuPathDB" id="HostDB:ENSMUSG00000031645"/>
<dbReference type="eggNOG" id="KOG3627">
    <property type="taxonomic scope" value="Eukaryota"/>
</dbReference>
<dbReference type="GeneTree" id="ENSGT00940000158569"/>
<dbReference type="HOGENOM" id="CLU_031604_0_0_1"/>
<dbReference type="InParanoid" id="Q91Y47"/>
<dbReference type="OMA" id="QNCRHSV"/>
<dbReference type="OrthoDB" id="9448935at2759"/>
<dbReference type="PhylomeDB" id="Q91Y47"/>
<dbReference type="TreeFam" id="TF343687"/>
<dbReference type="Reactome" id="R-MMU-140837">
    <property type="pathway name" value="Intrinsic Pathway of Fibrin Clot Formation"/>
</dbReference>
<dbReference type="BioGRID-ORCS" id="109821">
    <property type="hits" value="5 hits in 60 CRISPR screens"/>
</dbReference>
<dbReference type="ChiTaRS" id="F11">
    <property type="organism name" value="mouse"/>
</dbReference>
<dbReference type="PRO" id="PR:Q91Y47"/>
<dbReference type="Proteomes" id="UP000000589">
    <property type="component" value="Chromosome 8"/>
</dbReference>
<dbReference type="RNAct" id="Q91Y47">
    <property type="molecule type" value="protein"/>
</dbReference>
<dbReference type="Bgee" id="ENSMUSG00000031645">
    <property type="expression patterns" value="Expressed in left lobe of liver and 20 other cell types or tissues"/>
</dbReference>
<dbReference type="GO" id="GO:0005615">
    <property type="term" value="C:extracellular space"/>
    <property type="evidence" value="ECO:0007669"/>
    <property type="project" value="Ensembl"/>
</dbReference>
<dbReference type="GO" id="GO:0008201">
    <property type="term" value="F:heparin binding"/>
    <property type="evidence" value="ECO:0007669"/>
    <property type="project" value="UniProtKB-KW"/>
</dbReference>
<dbReference type="GO" id="GO:0070009">
    <property type="term" value="F:serine-type aminopeptidase activity"/>
    <property type="evidence" value="ECO:0007669"/>
    <property type="project" value="Ensembl"/>
</dbReference>
<dbReference type="GO" id="GO:0004252">
    <property type="term" value="F:serine-type endopeptidase activity"/>
    <property type="evidence" value="ECO:0007669"/>
    <property type="project" value="UniProtKB-EC"/>
</dbReference>
<dbReference type="GO" id="GO:0007596">
    <property type="term" value="P:blood coagulation"/>
    <property type="evidence" value="ECO:0007669"/>
    <property type="project" value="UniProtKB-KW"/>
</dbReference>
<dbReference type="GO" id="GO:0031639">
    <property type="term" value="P:plasminogen activation"/>
    <property type="evidence" value="ECO:0007669"/>
    <property type="project" value="Ensembl"/>
</dbReference>
<dbReference type="GO" id="GO:0051919">
    <property type="term" value="P:positive regulation of fibrinolysis"/>
    <property type="evidence" value="ECO:0007669"/>
    <property type="project" value="Ensembl"/>
</dbReference>
<dbReference type="GO" id="GO:0030193">
    <property type="term" value="P:regulation of blood coagulation"/>
    <property type="evidence" value="ECO:0000315"/>
    <property type="project" value="MGI"/>
</dbReference>
<dbReference type="CDD" id="cd01100">
    <property type="entry name" value="APPLE_Factor_XI_like"/>
    <property type="match status" value="4"/>
</dbReference>
<dbReference type="CDD" id="cd00190">
    <property type="entry name" value="Tryp_SPc"/>
    <property type="match status" value="1"/>
</dbReference>
<dbReference type="FunFam" id="2.40.10.10:FF:000464">
    <property type="match status" value="1"/>
</dbReference>
<dbReference type="FunFam" id="3.50.4.10:FF:000001">
    <property type="entry name" value="Coagulation factor XI"/>
    <property type="match status" value="3"/>
</dbReference>
<dbReference type="Gene3D" id="3.50.4.10">
    <property type="entry name" value="Hepatocyte Growth Factor"/>
    <property type="match status" value="4"/>
</dbReference>
<dbReference type="Gene3D" id="2.40.10.10">
    <property type="entry name" value="Trypsin-like serine proteases"/>
    <property type="match status" value="1"/>
</dbReference>
<dbReference type="InterPro" id="IPR000177">
    <property type="entry name" value="Apple"/>
</dbReference>
<dbReference type="InterPro" id="IPR003609">
    <property type="entry name" value="Pan_app"/>
</dbReference>
<dbReference type="InterPro" id="IPR009003">
    <property type="entry name" value="Peptidase_S1_PA"/>
</dbReference>
<dbReference type="InterPro" id="IPR043504">
    <property type="entry name" value="Peptidase_S1_PA_chymotrypsin"/>
</dbReference>
<dbReference type="InterPro" id="IPR001314">
    <property type="entry name" value="Peptidase_S1A"/>
</dbReference>
<dbReference type="InterPro" id="IPR001254">
    <property type="entry name" value="Trypsin_dom"/>
</dbReference>
<dbReference type="InterPro" id="IPR018114">
    <property type="entry name" value="TRYPSIN_HIS"/>
</dbReference>
<dbReference type="InterPro" id="IPR033116">
    <property type="entry name" value="TRYPSIN_SER"/>
</dbReference>
<dbReference type="PANTHER" id="PTHR24252">
    <property type="entry name" value="ACROSIN-RELATED"/>
    <property type="match status" value="1"/>
</dbReference>
<dbReference type="PANTHER" id="PTHR24252:SF7">
    <property type="entry name" value="HYALIN"/>
    <property type="match status" value="1"/>
</dbReference>
<dbReference type="Pfam" id="PF00024">
    <property type="entry name" value="PAN_1"/>
    <property type="match status" value="4"/>
</dbReference>
<dbReference type="Pfam" id="PF00089">
    <property type="entry name" value="Trypsin"/>
    <property type="match status" value="1"/>
</dbReference>
<dbReference type="PRINTS" id="PR00005">
    <property type="entry name" value="APPLEDOMAIN"/>
</dbReference>
<dbReference type="PRINTS" id="PR00722">
    <property type="entry name" value="CHYMOTRYPSIN"/>
</dbReference>
<dbReference type="SMART" id="SM00223">
    <property type="entry name" value="APPLE"/>
    <property type="match status" value="4"/>
</dbReference>
<dbReference type="SMART" id="SM00020">
    <property type="entry name" value="Tryp_SPc"/>
    <property type="match status" value="1"/>
</dbReference>
<dbReference type="SUPFAM" id="SSF50494">
    <property type="entry name" value="Trypsin-like serine proteases"/>
    <property type="match status" value="1"/>
</dbReference>
<dbReference type="PROSITE" id="PS00495">
    <property type="entry name" value="APPLE"/>
    <property type="match status" value="3"/>
</dbReference>
<dbReference type="PROSITE" id="PS50948">
    <property type="entry name" value="PAN"/>
    <property type="match status" value="4"/>
</dbReference>
<dbReference type="PROSITE" id="PS50240">
    <property type="entry name" value="TRYPSIN_DOM"/>
    <property type="match status" value="1"/>
</dbReference>
<dbReference type="PROSITE" id="PS00134">
    <property type="entry name" value="TRYPSIN_HIS"/>
    <property type="match status" value="1"/>
</dbReference>
<dbReference type="PROSITE" id="PS00135">
    <property type="entry name" value="TRYPSIN_SER"/>
    <property type="match status" value="1"/>
</dbReference>
<evidence type="ECO:0000250" key="1"/>
<evidence type="ECO:0000250" key="2">
    <source>
        <dbReference type="UniProtKB" id="P03951"/>
    </source>
</evidence>
<evidence type="ECO:0000255" key="3"/>
<evidence type="ECO:0000255" key="4">
    <source>
        <dbReference type="PROSITE-ProRule" id="PRU00274"/>
    </source>
</evidence>
<evidence type="ECO:0000255" key="5">
    <source>
        <dbReference type="PROSITE-ProRule" id="PRU00315"/>
    </source>
</evidence>
<evidence type="ECO:0000305" key="6"/>
<accession>Q91Y47</accession>
<accession>Q9DAT3</accession>
<sequence length="624" mass="69789">MTSLHQVLYFIFFASVSSECVTKVFKDISFQGGDLSTVFTPSATYCRLVCTHHPRCLLFTFMAESSSDDPTKWFACILKDSVTEILPMVNMTGAISGYSFKQCPQQLSTCSKDVYVNLDMKGMNYNSSVVKNARECQERCTDDAHCQFFTYATGYFPSVDHRKMCLLKYTRTGTPTTITKLNGVVSGFSLKSCGLSNLACIRDIFPNTVLADLNIDSVVAPDAFVCRRICTHHPTCLFFTFFSQAWPKESQRHLCLLKTSESGLPSTRITKSHALSGFSLQHCRHSVPVFCHPSFYNDTDFLGEELDIVDVKGQETCQKTCTNNARCQFFTYYPSHRLCNERNRRGRCYLKLSSNGSPTRILHGRGGISGYSLRLCKMDNVCTTKINPRVVGGAASVHGEWPWQVTLHISQGHLCGGSIIGNQWILTAAHCFSGIETPKKLRVYGGIVNQSEINEGTAFFRVQEMIIHDQYTTAESGYDIALLKLESAMNYTDFQRPICLPSKGDRNAVHTECWVTGWGYTALRGEVQSTLQKAKVPLVSNEECQTRYRRHKITNKMICAGYKEGGKDTCKGDSGGPLSCKYNGVWHLVGITSWGEGCGQKERPGVYTNVAKYVDWILEKTQTV</sequence>